<organism>
    <name type="scientific">Bacillus cytotoxicus (strain DSM 22905 / CIP 110041 / 391-98 / NVH 391-98)</name>
    <dbReference type="NCBI Taxonomy" id="315749"/>
    <lineage>
        <taxon>Bacteria</taxon>
        <taxon>Bacillati</taxon>
        <taxon>Bacillota</taxon>
        <taxon>Bacilli</taxon>
        <taxon>Bacillales</taxon>
        <taxon>Bacillaceae</taxon>
        <taxon>Bacillus</taxon>
        <taxon>Bacillus cereus group</taxon>
    </lineage>
</organism>
<reference key="1">
    <citation type="journal article" date="2008" name="Chem. Biol. Interact.">
        <title>Extending the Bacillus cereus group genomics to putative food-borne pathogens of different toxicity.</title>
        <authorList>
            <person name="Lapidus A."/>
            <person name="Goltsman E."/>
            <person name="Auger S."/>
            <person name="Galleron N."/>
            <person name="Segurens B."/>
            <person name="Dossat C."/>
            <person name="Land M.L."/>
            <person name="Broussolle V."/>
            <person name="Brillard J."/>
            <person name="Guinebretiere M.-H."/>
            <person name="Sanchis V."/>
            <person name="Nguen-the C."/>
            <person name="Lereclus D."/>
            <person name="Richardson P."/>
            <person name="Wincker P."/>
            <person name="Weissenbach J."/>
            <person name="Ehrlich S.D."/>
            <person name="Sorokin A."/>
        </authorList>
    </citation>
    <scope>NUCLEOTIDE SEQUENCE [LARGE SCALE GENOMIC DNA]</scope>
    <source>
        <strain>DSM 22905 / CIP 110041 / 391-98 / NVH 391-98</strain>
    </source>
</reference>
<sequence length="428" mass="46650">MNYLFKNGRYLNEEGTIVATDLLVQDGKIAKIAKNISAENAEVIDVNGKLIAPGLVDVHVHLREPGGEHKETIETGTLAAAKGGFTTICAMPNTRPVPDSKEHMEDLQKRIQEKAHVNVLPYGAITVRQAGSEMTDFETLKELGAFAFTDDGVGVQDASMMLAAMKRAAKLNMAVVAHCEENTLINKGCVHEGKFSEKHGLNGIPSVCESVHIARDILLAEAADCHYHVCHVSTKGSVRVIRDAKRAGIKVTAEVTPHHLVLCEDDIPSVDPNFKMNPPLRGREDQEALIEGLLDGTIDIIATDHAPHTAEEKAQGIERAPFGITGFETAFPLLYTNLVKKGIITLEQLIQFLTEKPADTFGLETGRLKEGRAADITILDLEQEEKIDPTTFLSKGKNTPFAGWKCQGWPVMTLVGGKIVWQKESALV</sequence>
<accession>A7GRL3</accession>
<evidence type="ECO:0000255" key="1">
    <source>
        <dbReference type="HAMAP-Rule" id="MF_00220"/>
    </source>
</evidence>
<gene>
    <name evidence="1" type="primary">pyrC</name>
    <name type="ordered locus">Bcer98_2537</name>
</gene>
<dbReference type="EC" id="3.5.2.3" evidence="1"/>
<dbReference type="EMBL" id="CP000764">
    <property type="protein sequence ID" value="ABS22771.1"/>
    <property type="molecule type" value="Genomic_DNA"/>
</dbReference>
<dbReference type="RefSeq" id="WP_012094978.1">
    <property type="nucleotide sequence ID" value="NC_009674.1"/>
</dbReference>
<dbReference type="SMR" id="A7GRL3"/>
<dbReference type="STRING" id="315749.Bcer98_2537"/>
<dbReference type="GeneID" id="33897791"/>
<dbReference type="KEGG" id="bcy:Bcer98_2537"/>
<dbReference type="eggNOG" id="COG0044">
    <property type="taxonomic scope" value="Bacteria"/>
</dbReference>
<dbReference type="HOGENOM" id="CLU_015572_1_0_9"/>
<dbReference type="OrthoDB" id="9765462at2"/>
<dbReference type="UniPathway" id="UPA00070">
    <property type="reaction ID" value="UER00117"/>
</dbReference>
<dbReference type="Proteomes" id="UP000002300">
    <property type="component" value="Chromosome"/>
</dbReference>
<dbReference type="GO" id="GO:0005737">
    <property type="term" value="C:cytoplasm"/>
    <property type="evidence" value="ECO:0007669"/>
    <property type="project" value="TreeGrafter"/>
</dbReference>
<dbReference type="GO" id="GO:0004038">
    <property type="term" value="F:allantoinase activity"/>
    <property type="evidence" value="ECO:0007669"/>
    <property type="project" value="TreeGrafter"/>
</dbReference>
<dbReference type="GO" id="GO:0004151">
    <property type="term" value="F:dihydroorotase activity"/>
    <property type="evidence" value="ECO:0007669"/>
    <property type="project" value="UniProtKB-UniRule"/>
</dbReference>
<dbReference type="GO" id="GO:0008270">
    <property type="term" value="F:zinc ion binding"/>
    <property type="evidence" value="ECO:0007669"/>
    <property type="project" value="UniProtKB-UniRule"/>
</dbReference>
<dbReference type="GO" id="GO:0044205">
    <property type="term" value="P:'de novo' UMP biosynthetic process"/>
    <property type="evidence" value="ECO:0007669"/>
    <property type="project" value="UniProtKB-UniRule"/>
</dbReference>
<dbReference type="GO" id="GO:0006145">
    <property type="term" value="P:purine nucleobase catabolic process"/>
    <property type="evidence" value="ECO:0007669"/>
    <property type="project" value="TreeGrafter"/>
</dbReference>
<dbReference type="CDD" id="cd01317">
    <property type="entry name" value="DHOase_IIa"/>
    <property type="match status" value="1"/>
</dbReference>
<dbReference type="FunFam" id="3.20.20.140:FF:000025">
    <property type="entry name" value="Dihydroorotase"/>
    <property type="match status" value="1"/>
</dbReference>
<dbReference type="Gene3D" id="3.20.20.140">
    <property type="entry name" value="Metal-dependent hydrolases"/>
    <property type="match status" value="1"/>
</dbReference>
<dbReference type="Gene3D" id="2.30.40.10">
    <property type="entry name" value="Urease, subunit C, domain 1"/>
    <property type="match status" value="2"/>
</dbReference>
<dbReference type="HAMAP" id="MF_00220_B">
    <property type="entry name" value="PyrC_classI_B"/>
    <property type="match status" value="1"/>
</dbReference>
<dbReference type="InterPro" id="IPR006680">
    <property type="entry name" value="Amidohydro-rel"/>
</dbReference>
<dbReference type="InterPro" id="IPR004722">
    <property type="entry name" value="DHOase"/>
</dbReference>
<dbReference type="InterPro" id="IPR050138">
    <property type="entry name" value="DHOase/Allantoinase_Hydrolase"/>
</dbReference>
<dbReference type="InterPro" id="IPR002195">
    <property type="entry name" value="Dihydroorotase_CS"/>
</dbReference>
<dbReference type="InterPro" id="IPR011059">
    <property type="entry name" value="Metal-dep_hydrolase_composite"/>
</dbReference>
<dbReference type="InterPro" id="IPR032466">
    <property type="entry name" value="Metal_Hydrolase"/>
</dbReference>
<dbReference type="NCBIfam" id="NF006837">
    <property type="entry name" value="PRK09357.1-2"/>
    <property type="match status" value="1"/>
</dbReference>
<dbReference type="NCBIfam" id="TIGR00857">
    <property type="entry name" value="pyrC_multi"/>
    <property type="match status" value="1"/>
</dbReference>
<dbReference type="PANTHER" id="PTHR43668">
    <property type="entry name" value="ALLANTOINASE"/>
    <property type="match status" value="1"/>
</dbReference>
<dbReference type="PANTHER" id="PTHR43668:SF2">
    <property type="entry name" value="ALLANTOINASE"/>
    <property type="match status" value="1"/>
</dbReference>
<dbReference type="Pfam" id="PF01979">
    <property type="entry name" value="Amidohydro_1"/>
    <property type="match status" value="1"/>
</dbReference>
<dbReference type="SUPFAM" id="SSF51338">
    <property type="entry name" value="Composite domain of metallo-dependent hydrolases"/>
    <property type="match status" value="1"/>
</dbReference>
<dbReference type="SUPFAM" id="SSF51556">
    <property type="entry name" value="Metallo-dependent hydrolases"/>
    <property type="match status" value="1"/>
</dbReference>
<dbReference type="PROSITE" id="PS00482">
    <property type="entry name" value="DIHYDROOROTASE_1"/>
    <property type="match status" value="1"/>
</dbReference>
<dbReference type="PROSITE" id="PS00483">
    <property type="entry name" value="DIHYDROOROTASE_2"/>
    <property type="match status" value="1"/>
</dbReference>
<feature type="chain" id="PRO_0000325586" description="Dihydroorotase">
    <location>
        <begin position="1"/>
        <end position="428"/>
    </location>
</feature>
<feature type="active site" evidence="1">
    <location>
        <position position="304"/>
    </location>
</feature>
<feature type="binding site" evidence="1">
    <location>
        <position position="59"/>
    </location>
    <ligand>
        <name>Zn(2+)</name>
        <dbReference type="ChEBI" id="CHEBI:29105"/>
        <label>1</label>
    </ligand>
</feature>
<feature type="binding site" evidence="1">
    <location>
        <begin position="61"/>
        <end position="63"/>
    </location>
    <ligand>
        <name>substrate</name>
    </ligand>
</feature>
<feature type="binding site" evidence="1">
    <location>
        <position position="61"/>
    </location>
    <ligand>
        <name>Zn(2+)</name>
        <dbReference type="ChEBI" id="CHEBI:29105"/>
        <label>1</label>
    </ligand>
</feature>
<feature type="binding site" evidence="1">
    <location>
        <position position="93"/>
    </location>
    <ligand>
        <name>substrate</name>
    </ligand>
</feature>
<feature type="binding site" evidence="1">
    <location>
        <position position="151"/>
    </location>
    <ligand>
        <name>Zn(2+)</name>
        <dbReference type="ChEBI" id="CHEBI:29105"/>
        <label>1</label>
    </ligand>
</feature>
<feature type="binding site" evidence="1">
    <location>
        <position position="151"/>
    </location>
    <ligand>
        <name>Zn(2+)</name>
        <dbReference type="ChEBI" id="CHEBI:29105"/>
        <label>2</label>
    </ligand>
</feature>
<feature type="binding site" evidence="1">
    <location>
        <position position="178"/>
    </location>
    <ligand>
        <name>Zn(2+)</name>
        <dbReference type="ChEBI" id="CHEBI:29105"/>
        <label>2</label>
    </ligand>
</feature>
<feature type="binding site" evidence="1">
    <location>
        <position position="231"/>
    </location>
    <ligand>
        <name>Zn(2+)</name>
        <dbReference type="ChEBI" id="CHEBI:29105"/>
        <label>2</label>
    </ligand>
</feature>
<feature type="binding site" evidence="1">
    <location>
        <position position="277"/>
    </location>
    <ligand>
        <name>substrate</name>
    </ligand>
</feature>
<feature type="binding site" evidence="1">
    <location>
        <position position="304"/>
    </location>
    <ligand>
        <name>Zn(2+)</name>
        <dbReference type="ChEBI" id="CHEBI:29105"/>
        <label>1</label>
    </ligand>
</feature>
<feature type="binding site" evidence="1">
    <location>
        <position position="308"/>
    </location>
    <ligand>
        <name>substrate</name>
    </ligand>
</feature>
<feature type="binding site" evidence="1">
    <location>
        <begin position="322"/>
        <end position="323"/>
    </location>
    <ligand>
        <name>substrate</name>
    </ligand>
</feature>
<proteinExistence type="inferred from homology"/>
<keyword id="KW-0378">Hydrolase</keyword>
<keyword id="KW-0479">Metal-binding</keyword>
<keyword id="KW-0665">Pyrimidine biosynthesis</keyword>
<keyword id="KW-0862">Zinc</keyword>
<comment type="function">
    <text evidence="1">Catalyzes the reversible cyclization of carbamoyl aspartate to dihydroorotate.</text>
</comment>
<comment type="catalytic activity">
    <reaction evidence="1">
        <text>(S)-dihydroorotate + H2O = N-carbamoyl-L-aspartate + H(+)</text>
        <dbReference type="Rhea" id="RHEA:24296"/>
        <dbReference type="ChEBI" id="CHEBI:15377"/>
        <dbReference type="ChEBI" id="CHEBI:15378"/>
        <dbReference type="ChEBI" id="CHEBI:30864"/>
        <dbReference type="ChEBI" id="CHEBI:32814"/>
        <dbReference type="EC" id="3.5.2.3"/>
    </reaction>
</comment>
<comment type="cofactor">
    <cofactor evidence="1">
        <name>Zn(2+)</name>
        <dbReference type="ChEBI" id="CHEBI:29105"/>
    </cofactor>
    <text evidence="1">Binds 2 Zn(2+) ions per subunit.</text>
</comment>
<comment type="pathway">
    <text evidence="1">Pyrimidine metabolism; UMP biosynthesis via de novo pathway; (S)-dihydroorotate from bicarbonate: step 3/3.</text>
</comment>
<comment type="similarity">
    <text evidence="1">Belongs to the metallo-dependent hydrolases superfamily. DHOase family. Class I DHOase subfamily.</text>
</comment>
<name>PYRC_BACCN</name>
<protein>
    <recommendedName>
        <fullName evidence="1">Dihydroorotase</fullName>
        <shortName evidence="1">DHOase</shortName>
        <ecNumber evidence="1">3.5.2.3</ecNumber>
    </recommendedName>
</protein>